<feature type="chain" id="PRO_0000119340" description="Transcription initiation factor IIB 1">
    <location>
        <begin position="1"/>
        <end position="312"/>
    </location>
</feature>
<feature type="repeat" description="1">
    <location>
        <begin position="129"/>
        <end position="212"/>
    </location>
</feature>
<feature type="repeat" description="2">
    <location>
        <begin position="223"/>
        <end position="304"/>
    </location>
</feature>
<feature type="zinc finger region" description="TFIIB-type" evidence="2">
    <location>
        <begin position="12"/>
        <end position="43"/>
    </location>
</feature>
<feature type="binding site" evidence="2">
    <location>
        <position position="16"/>
    </location>
    <ligand>
        <name>Zn(2+)</name>
        <dbReference type="ChEBI" id="CHEBI:29105"/>
    </ligand>
</feature>
<feature type="binding site" evidence="2">
    <location>
        <position position="19"/>
    </location>
    <ligand>
        <name>Zn(2+)</name>
        <dbReference type="ChEBI" id="CHEBI:29105"/>
    </ligand>
</feature>
<feature type="binding site" evidence="2">
    <location>
        <position position="35"/>
    </location>
    <ligand>
        <name>Zn(2+)</name>
        <dbReference type="ChEBI" id="CHEBI:29105"/>
    </ligand>
</feature>
<feature type="binding site" evidence="2">
    <location>
        <position position="38"/>
    </location>
    <ligand>
        <name>Zn(2+)</name>
        <dbReference type="ChEBI" id="CHEBI:29105"/>
    </ligand>
</feature>
<evidence type="ECO:0000255" key="1">
    <source>
        <dbReference type="HAMAP-Rule" id="MF_00383"/>
    </source>
</evidence>
<evidence type="ECO:0000255" key="2">
    <source>
        <dbReference type="PROSITE-ProRule" id="PRU00469"/>
    </source>
</evidence>
<organism>
    <name type="scientific">Thermoplasma volcanium (strain ATCC 51530 / DSM 4299 / JCM 9571 / NBRC 15438 / GSS1)</name>
    <dbReference type="NCBI Taxonomy" id="273116"/>
    <lineage>
        <taxon>Archaea</taxon>
        <taxon>Methanobacteriati</taxon>
        <taxon>Thermoplasmatota</taxon>
        <taxon>Thermoplasmata</taxon>
        <taxon>Thermoplasmatales</taxon>
        <taxon>Thermoplasmataceae</taxon>
        <taxon>Thermoplasma</taxon>
    </lineage>
</organism>
<name>TF2B1_THEVO</name>
<sequence length="312" mass="35266">MVENQKKKKIEEIERCPECGSTNLIRDYEHGELVCGECGAVIEDSYIDQGPEWRAFDSEQNESRARAGSPMTFTIHDKGLSTDISWKNKDSYGRSIPTRNRAQLYRLRKWQKRIKVSNAAERNLSQALQELERMAFNLSIPNDVRETAAVIYRKAVKQNMIRGRSIEGVVAGALYAACRITNVPRTLGEIASVTRVKKKEIGRTYRIMSRYLKLNIMPSKAEDYISRFCSKLKLSMDTRNKALEILRDAENVGLTSGKGPTGVAAAAIYIASLITGERRTQRAVAEVAGVTEVTIRNRYKELTEKLKLNVEQ</sequence>
<reference key="1">
    <citation type="journal article" date="2000" name="Proc. Natl. Acad. Sci. U.S.A.">
        <title>Archaeal adaptation to higher temperatures revealed by genomic sequence of Thermoplasma volcanium.</title>
        <authorList>
            <person name="Kawashima T."/>
            <person name="Amano N."/>
            <person name="Koike H."/>
            <person name="Makino S."/>
            <person name="Higuchi S."/>
            <person name="Kawashima-Ohya Y."/>
            <person name="Watanabe K."/>
            <person name="Yamazaki M."/>
            <person name="Kanehori K."/>
            <person name="Kawamoto T."/>
            <person name="Nunoshiba T."/>
            <person name="Yamamoto Y."/>
            <person name="Aramaki H."/>
            <person name="Makino K."/>
            <person name="Suzuki M."/>
        </authorList>
    </citation>
    <scope>NUCLEOTIDE SEQUENCE [LARGE SCALE GENOMIC DNA]</scope>
    <source>
        <strain>ATCC 51530 / DSM 4299 / JCM 9571 / NBRC 15438 / GSS1</strain>
    </source>
</reference>
<comment type="function">
    <text evidence="1">Stabilizes TBP binding to an archaeal box-A promoter. Also responsible for recruiting RNA polymerase II to the pre-initiation complex (DNA-TBP-TFIIB).</text>
</comment>
<comment type="similarity">
    <text evidence="1">Belongs to the TFIIB family.</text>
</comment>
<proteinExistence type="inferred from homology"/>
<protein>
    <recommendedName>
        <fullName evidence="1">Transcription initiation factor IIB 1</fullName>
        <shortName evidence="1">TFIIB 1</shortName>
    </recommendedName>
</protein>
<accession>Q979Q3</accession>
<gene>
    <name evidence="1" type="primary">tfbA</name>
    <name type="ordered locus">TV1107</name>
    <name type="ORF">TVG1139885</name>
</gene>
<keyword id="KW-0479">Metal-binding</keyword>
<keyword id="KW-0677">Repeat</keyword>
<keyword id="KW-0804">Transcription</keyword>
<keyword id="KW-0805">Transcription regulation</keyword>
<keyword id="KW-0862">Zinc</keyword>
<keyword id="KW-0863">Zinc-finger</keyword>
<dbReference type="EMBL" id="BA000011">
    <property type="protein sequence ID" value="BAB60249.1"/>
    <property type="molecule type" value="Genomic_DNA"/>
</dbReference>
<dbReference type="RefSeq" id="WP_010917341.1">
    <property type="nucleotide sequence ID" value="NC_002689.2"/>
</dbReference>
<dbReference type="SMR" id="Q979Q3"/>
<dbReference type="STRING" id="273116.gene:9381906"/>
<dbReference type="PaxDb" id="273116-14325345"/>
<dbReference type="GeneID" id="1441223"/>
<dbReference type="KEGG" id="tvo:TVG1139885"/>
<dbReference type="eggNOG" id="arCOG01981">
    <property type="taxonomic scope" value="Archaea"/>
</dbReference>
<dbReference type="HOGENOM" id="CLU_043736_0_1_2"/>
<dbReference type="OrthoDB" id="7429at2157"/>
<dbReference type="PhylomeDB" id="Q979Q3"/>
<dbReference type="Proteomes" id="UP000001017">
    <property type="component" value="Chromosome"/>
</dbReference>
<dbReference type="GO" id="GO:0097550">
    <property type="term" value="C:transcription preinitiation complex"/>
    <property type="evidence" value="ECO:0007669"/>
    <property type="project" value="TreeGrafter"/>
</dbReference>
<dbReference type="GO" id="GO:0003700">
    <property type="term" value="F:DNA-binding transcription factor activity"/>
    <property type="evidence" value="ECO:0007669"/>
    <property type="project" value="UniProtKB-UniRule"/>
</dbReference>
<dbReference type="GO" id="GO:0017025">
    <property type="term" value="F:TBP-class protein binding"/>
    <property type="evidence" value="ECO:0007669"/>
    <property type="project" value="InterPro"/>
</dbReference>
<dbReference type="GO" id="GO:0008270">
    <property type="term" value="F:zinc ion binding"/>
    <property type="evidence" value="ECO:0007669"/>
    <property type="project" value="UniProtKB-UniRule"/>
</dbReference>
<dbReference type="GO" id="GO:0070897">
    <property type="term" value="P:transcription preinitiation complex assembly"/>
    <property type="evidence" value="ECO:0007669"/>
    <property type="project" value="InterPro"/>
</dbReference>
<dbReference type="CDD" id="cd20549">
    <property type="entry name" value="CYCLIN_TFIIB_archaea_like_rpt1"/>
    <property type="match status" value="1"/>
</dbReference>
<dbReference type="CDD" id="cd20550">
    <property type="entry name" value="CYCLIN_TFIIB_archaea_like_rpt2"/>
    <property type="match status" value="1"/>
</dbReference>
<dbReference type="FunFam" id="1.10.472.10:FF:000023">
    <property type="entry name" value="Transcription initiation factor IIB"/>
    <property type="match status" value="1"/>
</dbReference>
<dbReference type="FunFam" id="1.10.472.170:FF:000001">
    <property type="entry name" value="Transcription initiation factor IIB"/>
    <property type="match status" value="1"/>
</dbReference>
<dbReference type="Gene3D" id="1.10.472.170">
    <property type="match status" value="1"/>
</dbReference>
<dbReference type="Gene3D" id="1.10.472.10">
    <property type="entry name" value="Cyclin-like"/>
    <property type="match status" value="1"/>
</dbReference>
<dbReference type="HAMAP" id="MF_00383">
    <property type="entry name" value="TF2B_arch"/>
    <property type="match status" value="1"/>
</dbReference>
<dbReference type="InterPro" id="IPR013763">
    <property type="entry name" value="Cyclin-like_dom"/>
</dbReference>
<dbReference type="InterPro" id="IPR036915">
    <property type="entry name" value="Cyclin-like_sf"/>
</dbReference>
<dbReference type="InterPro" id="IPR000812">
    <property type="entry name" value="TFIIB"/>
</dbReference>
<dbReference type="InterPro" id="IPR023484">
    <property type="entry name" value="TFIIB_arc"/>
</dbReference>
<dbReference type="InterPro" id="IPR023486">
    <property type="entry name" value="TFIIB_CS"/>
</dbReference>
<dbReference type="InterPro" id="IPR013150">
    <property type="entry name" value="TFIIB_cyclin"/>
</dbReference>
<dbReference type="InterPro" id="IPR013137">
    <property type="entry name" value="Znf_TFIIB"/>
</dbReference>
<dbReference type="NCBIfam" id="NF001658">
    <property type="entry name" value="PRK00423.1"/>
    <property type="match status" value="1"/>
</dbReference>
<dbReference type="PANTHER" id="PTHR11618:SF13">
    <property type="entry name" value="TRANSCRIPTION INITIATION FACTOR IIB"/>
    <property type="match status" value="1"/>
</dbReference>
<dbReference type="PANTHER" id="PTHR11618">
    <property type="entry name" value="TRANSCRIPTION INITIATION FACTOR IIB-RELATED"/>
    <property type="match status" value="1"/>
</dbReference>
<dbReference type="Pfam" id="PF00382">
    <property type="entry name" value="TFIIB"/>
    <property type="match status" value="2"/>
</dbReference>
<dbReference type="Pfam" id="PF08271">
    <property type="entry name" value="Zn_Ribbon_TF"/>
    <property type="match status" value="1"/>
</dbReference>
<dbReference type="PRINTS" id="PR00685">
    <property type="entry name" value="TIFACTORIIB"/>
</dbReference>
<dbReference type="SMART" id="SM00385">
    <property type="entry name" value="CYCLIN"/>
    <property type="match status" value="2"/>
</dbReference>
<dbReference type="SUPFAM" id="SSF47954">
    <property type="entry name" value="Cyclin-like"/>
    <property type="match status" value="2"/>
</dbReference>
<dbReference type="SUPFAM" id="SSF57783">
    <property type="entry name" value="Zinc beta-ribbon"/>
    <property type="match status" value="1"/>
</dbReference>
<dbReference type="PROSITE" id="PS00782">
    <property type="entry name" value="TFIIB"/>
    <property type="match status" value="2"/>
</dbReference>
<dbReference type="PROSITE" id="PS51134">
    <property type="entry name" value="ZF_TFIIB"/>
    <property type="match status" value="1"/>
</dbReference>